<feature type="chain" id="PRO_0000158161" description="Imidazoleglycerol-phosphate dehydratase">
    <location>
        <begin position="1"/>
        <end position="202"/>
    </location>
</feature>
<dbReference type="EC" id="4.2.1.19" evidence="1"/>
<dbReference type="EMBL" id="AL591688">
    <property type="protein sequence ID" value="CAC41442.1"/>
    <property type="molecule type" value="Genomic_DNA"/>
</dbReference>
<dbReference type="RefSeq" id="NP_384161.1">
    <property type="nucleotide sequence ID" value="NC_003047.1"/>
</dbReference>
<dbReference type="RefSeq" id="WP_010968320.1">
    <property type="nucleotide sequence ID" value="NC_003047.1"/>
</dbReference>
<dbReference type="SMR" id="Q92TB0"/>
<dbReference type="EnsemblBacteria" id="CAC41442">
    <property type="protein sequence ID" value="CAC41442"/>
    <property type="gene ID" value="SMc02574"/>
</dbReference>
<dbReference type="KEGG" id="sme:SMc02574"/>
<dbReference type="PATRIC" id="fig|266834.11.peg.1409"/>
<dbReference type="eggNOG" id="COG0131">
    <property type="taxonomic scope" value="Bacteria"/>
</dbReference>
<dbReference type="HOGENOM" id="CLU_044308_3_0_5"/>
<dbReference type="OrthoDB" id="9813612at2"/>
<dbReference type="UniPathway" id="UPA00031">
    <property type="reaction ID" value="UER00011"/>
</dbReference>
<dbReference type="Proteomes" id="UP000001976">
    <property type="component" value="Chromosome"/>
</dbReference>
<dbReference type="GO" id="GO:0005737">
    <property type="term" value="C:cytoplasm"/>
    <property type="evidence" value="ECO:0007669"/>
    <property type="project" value="UniProtKB-SubCell"/>
</dbReference>
<dbReference type="GO" id="GO:0004424">
    <property type="term" value="F:imidazoleglycerol-phosphate dehydratase activity"/>
    <property type="evidence" value="ECO:0007669"/>
    <property type="project" value="UniProtKB-UniRule"/>
</dbReference>
<dbReference type="GO" id="GO:0000105">
    <property type="term" value="P:L-histidine biosynthetic process"/>
    <property type="evidence" value="ECO:0007669"/>
    <property type="project" value="UniProtKB-UniRule"/>
</dbReference>
<dbReference type="CDD" id="cd07914">
    <property type="entry name" value="IGPD"/>
    <property type="match status" value="1"/>
</dbReference>
<dbReference type="FunFam" id="3.30.230.40:FF:000001">
    <property type="entry name" value="Imidazoleglycerol-phosphate dehydratase HisB"/>
    <property type="match status" value="1"/>
</dbReference>
<dbReference type="FunFam" id="3.30.230.40:FF:000003">
    <property type="entry name" value="Imidazoleglycerol-phosphate dehydratase HisB"/>
    <property type="match status" value="1"/>
</dbReference>
<dbReference type="Gene3D" id="3.30.230.40">
    <property type="entry name" value="Imidazole glycerol phosphate dehydratase, domain 1"/>
    <property type="match status" value="2"/>
</dbReference>
<dbReference type="HAMAP" id="MF_00076">
    <property type="entry name" value="HisB"/>
    <property type="match status" value="1"/>
</dbReference>
<dbReference type="InterPro" id="IPR038494">
    <property type="entry name" value="IGPD_sf"/>
</dbReference>
<dbReference type="InterPro" id="IPR000807">
    <property type="entry name" value="ImidazoleglycerolP_deHydtase"/>
</dbReference>
<dbReference type="InterPro" id="IPR020565">
    <property type="entry name" value="ImidazoleglycerP_deHydtase_CS"/>
</dbReference>
<dbReference type="InterPro" id="IPR020568">
    <property type="entry name" value="Ribosomal_Su5_D2-typ_SF"/>
</dbReference>
<dbReference type="NCBIfam" id="NF002109">
    <property type="entry name" value="PRK00951.1-5"/>
    <property type="match status" value="1"/>
</dbReference>
<dbReference type="NCBIfam" id="NF002111">
    <property type="entry name" value="PRK00951.2-1"/>
    <property type="match status" value="1"/>
</dbReference>
<dbReference type="NCBIfam" id="NF002114">
    <property type="entry name" value="PRK00951.2-4"/>
    <property type="match status" value="1"/>
</dbReference>
<dbReference type="PANTHER" id="PTHR23133:SF2">
    <property type="entry name" value="IMIDAZOLEGLYCEROL-PHOSPHATE DEHYDRATASE"/>
    <property type="match status" value="1"/>
</dbReference>
<dbReference type="PANTHER" id="PTHR23133">
    <property type="entry name" value="IMIDAZOLEGLYCEROL-PHOSPHATE DEHYDRATASE HIS7"/>
    <property type="match status" value="1"/>
</dbReference>
<dbReference type="Pfam" id="PF00475">
    <property type="entry name" value="IGPD"/>
    <property type="match status" value="1"/>
</dbReference>
<dbReference type="SUPFAM" id="SSF54211">
    <property type="entry name" value="Ribosomal protein S5 domain 2-like"/>
    <property type="match status" value="2"/>
</dbReference>
<dbReference type="PROSITE" id="PS00954">
    <property type="entry name" value="IGP_DEHYDRATASE_1"/>
    <property type="match status" value="1"/>
</dbReference>
<dbReference type="PROSITE" id="PS00955">
    <property type="entry name" value="IGP_DEHYDRATASE_2"/>
    <property type="match status" value="1"/>
</dbReference>
<keyword id="KW-0028">Amino-acid biosynthesis</keyword>
<keyword id="KW-0963">Cytoplasm</keyword>
<keyword id="KW-0368">Histidine biosynthesis</keyword>
<keyword id="KW-0456">Lyase</keyword>
<keyword id="KW-1185">Reference proteome</keyword>
<organism>
    <name type="scientific">Rhizobium meliloti (strain 1021)</name>
    <name type="common">Ensifer meliloti</name>
    <name type="synonym">Sinorhizobium meliloti</name>
    <dbReference type="NCBI Taxonomy" id="266834"/>
    <lineage>
        <taxon>Bacteria</taxon>
        <taxon>Pseudomonadati</taxon>
        <taxon>Pseudomonadota</taxon>
        <taxon>Alphaproteobacteria</taxon>
        <taxon>Hyphomicrobiales</taxon>
        <taxon>Rhizobiaceae</taxon>
        <taxon>Sinorhizobium/Ensifer group</taxon>
        <taxon>Sinorhizobium</taxon>
    </lineage>
</organism>
<gene>
    <name evidence="1" type="primary">hisB</name>
    <name type="ordered locus">R00055</name>
    <name type="ORF">SMc02574</name>
</gene>
<protein>
    <recommendedName>
        <fullName evidence="1">Imidazoleglycerol-phosphate dehydratase</fullName>
        <shortName evidence="1">IGPD</shortName>
        <ecNumber evidence="1">4.2.1.19</ecNumber>
    </recommendedName>
</protein>
<accession>Q92TB0</accession>
<name>HIS7_RHIME</name>
<evidence type="ECO:0000255" key="1">
    <source>
        <dbReference type="HAMAP-Rule" id="MF_00076"/>
    </source>
</evidence>
<comment type="catalytic activity">
    <reaction evidence="1">
        <text>D-erythro-1-(imidazol-4-yl)glycerol 3-phosphate = 3-(imidazol-4-yl)-2-oxopropyl phosphate + H2O</text>
        <dbReference type="Rhea" id="RHEA:11040"/>
        <dbReference type="ChEBI" id="CHEBI:15377"/>
        <dbReference type="ChEBI" id="CHEBI:57766"/>
        <dbReference type="ChEBI" id="CHEBI:58278"/>
        <dbReference type="EC" id="4.2.1.19"/>
    </reaction>
</comment>
<comment type="pathway">
    <text evidence="1">Amino-acid biosynthesis; L-histidine biosynthesis; L-histidine from 5-phospho-alpha-D-ribose 1-diphosphate: step 6/9.</text>
</comment>
<comment type="subcellular location">
    <subcellularLocation>
        <location evidence="1">Cytoplasm</location>
    </subcellularLocation>
</comment>
<comment type="similarity">
    <text evidence="1">Belongs to the imidazoleglycerol-phosphate dehydratase family.</text>
</comment>
<proteinExistence type="inferred from homology"/>
<sequence length="202" mass="21901">MADVMPSRTGQVSRKTNETAISVSVNVDGTGVSKIATGVGFFDHMLDQLSRHSLIDMEIKAEGDLHVDDHHTVEDTGIAIGQALAKALGDRRGITRYASIDLAMDETMTRAAVDVSGRPFLVWNVTFTSPKIGTFDTELVREFFQALAQHAGITLHVQNIYGANNHHVAETCFKSVARVLRTATEIDPRQAGRVPSTKGTLA</sequence>
<reference key="1">
    <citation type="journal article" date="2001" name="Proc. Natl. Acad. Sci. U.S.A.">
        <title>Analysis of the chromosome sequence of the legume symbiont Sinorhizobium meliloti strain 1021.</title>
        <authorList>
            <person name="Capela D."/>
            <person name="Barloy-Hubler F."/>
            <person name="Gouzy J."/>
            <person name="Bothe G."/>
            <person name="Ampe F."/>
            <person name="Batut J."/>
            <person name="Boistard P."/>
            <person name="Becker A."/>
            <person name="Boutry M."/>
            <person name="Cadieu E."/>
            <person name="Dreano S."/>
            <person name="Gloux S."/>
            <person name="Godrie T."/>
            <person name="Goffeau A."/>
            <person name="Kahn D."/>
            <person name="Kiss E."/>
            <person name="Lelaure V."/>
            <person name="Masuy D."/>
            <person name="Pohl T."/>
            <person name="Portetelle D."/>
            <person name="Puehler A."/>
            <person name="Purnelle B."/>
            <person name="Ramsperger U."/>
            <person name="Renard C."/>
            <person name="Thebault P."/>
            <person name="Vandenbol M."/>
            <person name="Weidner S."/>
            <person name="Galibert F."/>
        </authorList>
    </citation>
    <scope>NUCLEOTIDE SEQUENCE [LARGE SCALE GENOMIC DNA]</scope>
    <source>
        <strain>1021</strain>
    </source>
</reference>
<reference key="2">
    <citation type="journal article" date="2001" name="Science">
        <title>The composite genome of the legume symbiont Sinorhizobium meliloti.</title>
        <authorList>
            <person name="Galibert F."/>
            <person name="Finan T.M."/>
            <person name="Long S.R."/>
            <person name="Puehler A."/>
            <person name="Abola P."/>
            <person name="Ampe F."/>
            <person name="Barloy-Hubler F."/>
            <person name="Barnett M.J."/>
            <person name="Becker A."/>
            <person name="Boistard P."/>
            <person name="Bothe G."/>
            <person name="Boutry M."/>
            <person name="Bowser L."/>
            <person name="Buhrmester J."/>
            <person name="Cadieu E."/>
            <person name="Capela D."/>
            <person name="Chain P."/>
            <person name="Cowie A."/>
            <person name="Davis R.W."/>
            <person name="Dreano S."/>
            <person name="Federspiel N.A."/>
            <person name="Fisher R.F."/>
            <person name="Gloux S."/>
            <person name="Godrie T."/>
            <person name="Goffeau A."/>
            <person name="Golding B."/>
            <person name="Gouzy J."/>
            <person name="Gurjal M."/>
            <person name="Hernandez-Lucas I."/>
            <person name="Hong A."/>
            <person name="Huizar L."/>
            <person name="Hyman R.W."/>
            <person name="Jones T."/>
            <person name="Kahn D."/>
            <person name="Kahn M.L."/>
            <person name="Kalman S."/>
            <person name="Keating D.H."/>
            <person name="Kiss E."/>
            <person name="Komp C."/>
            <person name="Lelaure V."/>
            <person name="Masuy D."/>
            <person name="Palm C."/>
            <person name="Peck M.C."/>
            <person name="Pohl T.M."/>
            <person name="Portetelle D."/>
            <person name="Purnelle B."/>
            <person name="Ramsperger U."/>
            <person name="Surzycki R."/>
            <person name="Thebault P."/>
            <person name="Vandenbol M."/>
            <person name="Vorhoelter F.J."/>
            <person name="Weidner S."/>
            <person name="Wells D.H."/>
            <person name="Wong K."/>
            <person name="Yeh K.-C."/>
            <person name="Batut J."/>
        </authorList>
    </citation>
    <scope>NUCLEOTIDE SEQUENCE [LARGE SCALE GENOMIC DNA]</scope>
    <source>
        <strain>1021</strain>
    </source>
</reference>